<evidence type="ECO:0000255" key="1">
    <source>
        <dbReference type="HAMAP-Rule" id="MF_03035"/>
    </source>
</evidence>
<keyword id="KW-0067">ATP-binding</keyword>
<keyword id="KW-0507">mRNA processing</keyword>
<keyword id="KW-0547">Nucleotide-binding</keyword>
<keyword id="KW-0539">Nucleus</keyword>
<keyword id="KW-1185">Reference proteome</keyword>
<feature type="chain" id="PRO_0000375183" description="Protein CLP1 homolog">
    <location>
        <begin position="1"/>
        <end position="425"/>
    </location>
</feature>
<feature type="binding site" evidence="1">
    <location>
        <position position="18"/>
    </location>
    <ligand>
        <name>ATP</name>
        <dbReference type="ChEBI" id="CHEBI:30616"/>
    </ligand>
</feature>
<feature type="binding site" evidence="1">
    <location>
        <position position="59"/>
    </location>
    <ligand>
        <name>ATP</name>
        <dbReference type="ChEBI" id="CHEBI:30616"/>
    </ligand>
</feature>
<feature type="binding site" evidence="1">
    <location>
        <begin position="121"/>
        <end position="126"/>
    </location>
    <ligand>
        <name>ATP</name>
        <dbReference type="ChEBI" id="CHEBI:30616"/>
    </ligand>
</feature>
<comment type="function">
    <text evidence="1">Required for endonucleolytic cleavage during polyadenylation-dependent pre-mRNA 3'-end formation.</text>
</comment>
<comment type="subcellular location">
    <subcellularLocation>
        <location evidence="1">Nucleus</location>
    </subcellularLocation>
</comment>
<comment type="similarity">
    <text evidence="1">Belongs to the Clp1 family. Clp1 subfamily.</text>
</comment>
<organism>
    <name type="scientific">Drosophila pseudoobscura pseudoobscura</name>
    <name type="common">Fruit fly</name>
    <dbReference type="NCBI Taxonomy" id="46245"/>
    <lineage>
        <taxon>Eukaryota</taxon>
        <taxon>Metazoa</taxon>
        <taxon>Ecdysozoa</taxon>
        <taxon>Arthropoda</taxon>
        <taxon>Hexapoda</taxon>
        <taxon>Insecta</taxon>
        <taxon>Pterygota</taxon>
        <taxon>Neoptera</taxon>
        <taxon>Endopterygota</taxon>
        <taxon>Diptera</taxon>
        <taxon>Brachycera</taxon>
        <taxon>Muscomorpha</taxon>
        <taxon>Ephydroidea</taxon>
        <taxon>Drosophilidae</taxon>
        <taxon>Drosophila</taxon>
        <taxon>Sophophora</taxon>
    </lineage>
</organism>
<sequence>MSDHQNRGQDFSLEADSELRFEIEQKDAKVLVTLVNGFAELFGTELVKKKKYEFGMGAKVAIFTYQGCVLHVTGKMDVCYISKETPMVQYVNCHAALEQFRTEAEEKDRRGPVAMVVGPTDVGKSTLCRILLNYAVRVGRRPLYADLDVGQGAIAISGNVATILIERPASVEEGFPKTAPLVYHFGHKSPSGNSVLYNAVVSKMAEVTLQSLNGNKRTKSSGIIVNTCGWVKGHGYAHLLHAARAYGACAIFVLDQERLYNELLRDVPSSVHVVLLPKSGGVVERSKELRHECRDQRIKEYFYGNARAPFYPFSFEVKFQELRLYKIGAPPLPDSCMPIGMKAEDNKTKVVAVTPTPALIHHVLALSFAESVDDDVIGTNIAGFCCVTEVDMERQVVMLLSPQPRPLPPNALLLWSELQFMDNHT</sequence>
<accession>Q28ZT4</accession>
<dbReference type="EMBL" id="CM000071">
    <property type="protein sequence ID" value="EAL25529.1"/>
    <property type="molecule type" value="Genomic_DNA"/>
</dbReference>
<dbReference type="RefSeq" id="XP_001360953.1">
    <property type="nucleotide sequence ID" value="XM_001360916.2"/>
</dbReference>
<dbReference type="SMR" id="Q28ZT4"/>
<dbReference type="FunCoup" id="Q28ZT4">
    <property type="interactions" value="1605"/>
</dbReference>
<dbReference type="STRING" id="46245.Q28ZT4"/>
<dbReference type="EnsemblMetazoa" id="FBtr0278101">
    <property type="protein sequence ID" value="FBpp0276539"/>
    <property type="gene ID" value="FBgn0079265"/>
</dbReference>
<dbReference type="GeneID" id="4804382"/>
<dbReference type="KEGG" id="dpo:4804382"/>
<dbReference type="CTD" id="36494"/>
<dbReference type="eggNOG" id="KOG2749">
    <property type="taxonomic scope" value="Eukaryota"/>
</dbReference>
<dbReference type="HOGENOM" id="CLU_018195_1_0_1"/>
<dbReference type="InParanoid" id="Q28ZT4"/>
<dbReference type="OMA" id="VQYVNCH"/>
<dbReference type="PhylomeDB" id="Q28ZT4"/>
<dbReference type="Proteomes" id="UP000001819">
    <property type="component" value="Chromosome 3"/>
</dbReference>
<dbReference type="Bgee" id="FBgn0079265">
    <property type="expression patterns" value="Expressed in male reproductive system and 3 other cell types or tissues"/>
</dbReference>
<dbReference type="ExpressionAtlas" id="Q28ZT4">
    <property type="expression patterns" value="baseline"/>
</dbReference>
<dbReference type="GO" id="GO:0005849">
    <property type="term" value="C:mRNA cleavage factor complex"/>
    <property type="evidence" value="ECO:0007669"/>
    <property type="project" value="InterPro"/>
</dbReference>
<dbReference type="GO" id="GO:0000214">
    <property type="term" value="C:tRNA-intron endonuclease complex"/>
    <property type="evidence" value="ECO:0000250"/>
    <property type="project" value="UniProtKB"/>
</dbReference>
<dbReference type="GO" id="GO:0005524">
    <property type="term" value="F:ATP binding"/>
    <property type="evidence" value="ECO:0007669"/>
    <property type="project" value="UniProtKB-UniRule"/>
</dbReference>
<dbReference type="GO" id="GO:0051731">
    <property type="term" value="F:polynucleotide 5'-hydroxyl-kinase activity"/>
    <property type="evidence" value="ECO:0007669"/>
    <property type="project" value="InterPro"/>
</dbReference>
<dbReference type="GO" id="GO:0031124">
    <property type="term" value="P:mRNA 3'-end processing"/>
    <property type="evidence" value="ECO:0007669"/>
    <property type="project" value="UniProtKB-UniRule"/>
</dbReference>
<dbReference type="GO" id="GO:0006388">
    <property type="term" value="P:tRNA splicing, via endonucleolytic cleavage and ligation"/>
    <property type="evidence" value="ECO:0000250"/>
    <property type="project" value="UniProtKB"/>
</dbReference>
<dbReference type="CDD" id="cd01983">
    <property type="entry name" value="SIMIBI"/>
    <property type="match status" value="1"/>
</dbReference>
<dbReference type="FunFam" id="2.40.30.330:FF:000001">
    <property type="entry name" value="Protein CLP1 homolog"/>
    <property type="match status" value="1"/>
</dbReference>
<dbReference type="FunFam" id="3.40.50.300:FF:000454">
    <property type="entry name" value="Protein CLP1 homolog"/>
    <property type="match status" value="1"/>
</dbReference>
<dbReference type="FunFam" id="2.60.120.1030:FF:000001">
    <property type="entry name" value="Protein CLP1 homolog 5"/>
    <property type="match status" value="1"/>
</dbReference>
<dbReference type="Gene3D" id="2.60.120.1030">
    <property type="entry name" value="Clp1, DNA binding domain"/>
    <property type="match status" value="1"/>
</dbReference>
<dbReference type="Gene3D" id="3.40.50.300">
    <property type="entry name" value="P-loop containing nucleotide triphosphate hydrolases"/>
    <property type="match status" value="1"/>
</dbReference>
<dbReference type="Gene3D" id="2.40.30.330">
    <property type="entry name" value="Pre-mRNA cleavage complex subunit Clp1, C-terminal domain"/>
    <property type="match status" value="1"/>
</dbReference>
<dbReference type="HAMAP" id="MF_03035">
    <property type="entry name" value="Clp1"/>
    <property type="match status" value="1"/>
</dbReference>
<dbReference type="InterPro" id="IPR028606">
    <property type="entry name" value="Clp1"/>
</dbReference>
<dbReference type="InterPro" id="IPR045116">
    <property type="entry name" value="Clp1/Grc3"/>
</dbReference>
<dbReference type="InterPro" id="IPR010655">
    <property type="entry name" value="Clp1_C"/>
</dbReference>
<dbReference type="InterPro" id="IPR038238">
    <property type="entry name" value="Clp1_C_sf"/>
</dbReference>
<dbReference type="InterPro" id="IPR032324">
    <property type="entry name" value="Clp1_N"/>
</dbReference>
<dbReference type="InterPro" id="IPR038239">
    <property type="entry name" value="Clp1_N_sf"/>
</dbReference>
<dbReference type="InterPro" id="IPR032319">
    <property type="entry name" value="CLP1_P"/>
</dbReference>
<dbReference type="InterPro" id="IPR027417">
    <property type="entry name" value="P-loop_NTPase"/>
</dbReference>
<dbReference type="PANTHER" id="PTHR12755">
    <property type="entry name" value="CLEAVAGE/POLYADENYLATION FACTOR IA SUBUNIT CLP1P"/>
    <property type="match status" value="1"/>
</dbReference>
<dbReference type="PANTHER" id="PTHR12755:SF6">
    <property type="entry name" value="POLYRIBONUCLEOTIDE 5'-HYDROXYL-KINASE CLP1"/>
    <property type="match status" value="1"/>
</dbReference>
<dbReference type="Pfam" id="PF06807">
    <property type="entry name" value="Clp1"/>
    <property type="match status" value="1"/>
</dbReference>
<dbReference type="Pfam" id="PF16573">
    <property type="entry name" value="CLP1_N"/>
    <property type="match status" value="1"/>
</dbReference>
<dbReference type="Pfam" id="PF16575">
    <property type="entry name" value="CLP1_P"/>
    <property type="match status" value="1"/>
</dbReference>
<dbReference type="SUPFAM" id="SSF52540">
    <property type="entry name" value="P-loop containing nucleoside triphosphate hydrolases"/>
    <property type="match status" value="1"/>
</dbReference>
<protein>
    <recommendedName>
        <fullName evidence="1">Protein CLP1 homolog</fullName>
    </recommendedName>
</protein>
<reference key="1">
    <citation type="journal article" date="2005" name="Genome Res.">
        <title>Comparative genome sequencing of Drosophila pseudoobscura: chromosomal, gene, and cis-element evolution.</title>
        <authorList>
            <person name="Richards S."/>
            <person name="Liu Y."/>
            <person name="Bettencourt B.R."/>
            <person name="Hradecky P."/>
            <person name="Letovsky S."/>
            <person name="Nielsen R."/>
            <person name="Thornton K."/>
            <person name="Hubisz M.J."/>
            <person name="Chen R."/>
            <person name="Meisel R.P."/>
            <person name="Couronne O."/>
            <person name="Hua S."/>
            <person name="Smith M.A."/>
            <person name="Zhang P."/>
            <person name="Liu J."/>
            <person name="Bussemaker H.J."/>
            <person name="van Batenburg M.F."/>
            <person name="Howells S.L."/>
            <person name="Scherer S.E."/>
            <person name="Sodergren E."/>
            <person name="Matthews B.B."/>
            <person name="Crosby M.A."/>
            <person name="Schroeder A.J."/>
            <person name="Ortiz-Barrientos D."/>
            <person name="Rives C.M."/>
            <person name="Metzker M.L."/>
            <person name="Muzny D.M."/>
            <person name="Scott G."/>
            <person name="Steffen D."/>
            <person name="Wheeler D.A."/>
            <person name="Worley K.C."/>
            <person name="Havlak P."/>
            <person name="Durbin K.J."/>
            <person name="Egan A."/>
            <person name="Gill R."/>
            <person name="Hume J."/>
            <person name="Morgan M.B."/>
            <person name="Miner G."/>
            <person name="Hamilton C."/>
            <person name="Huang Y."/>
            <person name="Waldron L."/>
            <person name="Verduzco D."/>
            <person name="Clerc-Blankenburg K.P."/>
            <person name="Dubchak I."/>
            <person name="Noor M.A.F."/>
            <person name="Anderson W."/>
            <person name="White K.P."/>
            <person name="Clark A.G."/>
            <person name="Schaeffer S.W."/>
            <person name="Gelbart W.M."/>
            <person name="Weinstock G.M."/>
            <person name="Gibbs R.A."/>
        </authorList>
    </citation>
    <scope>NUCLEOTIDE SEQUENCE [LARGE SCALE GENOMIC DNA]</scope>
    <source>
        <strain>MV2-25 / Tucson 14011-0121.94</strain>
    </source>
</reference>
<name>CLP1_DROPS</name>
<proteinExistence type="inferred from homology"/>
<gene>
    <name type="primary">cbc</name>
    <name type="ORF">GA19268</name>
</gene>